<comment type="function">
    <text evidence="3">Required for production of the modified peptide YydF (Probable). May activate a metalloenzyme (Potential).</text>
</comment>
<comment type="cofactor">
    <cofactor evidence="3">
        <name>[4Fe-4S] cluster</name>
        <dbReference type="ChEBI" id="CHEBI:49883"/>
    </cofactor>
    <text evidence="3">Binds 1 [4Fe-4S] cluster. The cluster is coordinated with 3 cysteines and an exchangeable S-adenosyl-L-methionine.</text>
</comment>
<name>YYDG_BACSU</name>
<dbReference type="EMBL" id="D78193">
    <property type="protein sequence ID" value="BAA11275.1"/>
    <property type="molecule type" value="Genomic_DNA"/>
</dbReference>
<dbReference type="EMBL" id="AL009126">
    <property type="protein sequence ID" value="CAB16054.1"/>
    <property type="molecule type" value="Genomic_DNA"/>
</dbReference>
<dbReference type="PIR" id="E70091">
    <property type="entry name" value="E70091"/>
</dbReference>
<dbReference type="RefSeq" id="WP_003242609.1">
    <property type="nucleotide sequence ID" value="NZ_OZ025638.1"/>
</dbReference>
<dbReference type="PDB" id="8AI1">
    <property type="method" value="X-ray"/>
    <property type="resolution" value="2.40 A"/>
    <property type="chains" value="A/B=1-319"/>
</dbReference>
<dbReference type="PDB" id="8AI2">
    <property type="method" value="X-ray"/>
    <property type="resolution" value="2.39 A"/>
    <property type="chains" value="A/B=1-319"/>
</dbReference>
<dbReference type="PDB" id="8AI3">
    <property type="method" value="X-ray"/>
    <property type="resolution" value="2.10 A"/>
    <property type="chains" value="A/B=1-319"/>
</dbReference>
<dbReference type="PDB" id="8AI4">
    <property type="method" value="X-ray"/>
    <property type="resolution" value="1.75 A"/>
    <property type="chains" value="A/B=1-319"/>
</dbReference>
<dbReference type="PDB" id="8AI5">
    <property type="method" value="X-ray"/>
    <property type="resolution" value="2.15 A"/>
    <property type="chains" value="A/B=1-319"/>
</dbReference>
<dbReference type="PDB" id="8AI6">
    <property type="method" value="X-ray"/>
    <property type="resolution" value="1.95 A"/>
    <property type="chains" value="A/B=1-319"/>
</dbReference>
<dbReference type="PDBsum" id="8AI1"/>
<dbReference type="PDBsum" id="8AI2"/>
<dbReference type="PDBsum" id="8AI3"/>
<dbReference type="PDBsum" id="8AI4"/>
<dbReference type="PDBsum" id="8AI5"/>
<dbReference type="PDBsum" id="8AI6"/>
<dbReference type="SASBDB" id="Q45595"/>
<dbReference type="SMR" id="Q45595"/>
<dbReference type="FunCoup" id="Q45595">
    <property type="interactions" value="15"/>
</dbReference>
<dbReference type="STRING" id="224308.BSU40170"/>
<dbReference type="PaxDb" id="224308-BSU40170"/>
<dbReference type="EnsemblBacteria" id="CAB16054">
    <property type="protein sequence ID" value="CAB16054"/>
    <property type="gene ID" value="BSU_40170"/>
</dbReference>
<dbReference type="GeneID" id="937720"/>
<dbReference type="KEGG" id="bsu:BSU40170"/>
<dbReference type="PATRIC" id="fig|224308.179.peg.4345"/>
<dbReference type="eggNOG" id="COG0535">
    <property type="taxonomic scope" value="Bacteria"/>
</dbReference>
<dbReference type="InParanoid" id="Q45595"/>
<dbReference type="OrthoDB" id="6457556at2"/>
<dbReference type="BioCyc" id="BSUB:BSU40170-MONOMER"/>
<dbReference type="Proteomes" id="UP000001570">
    <property type="component" value="Chromosome"/>
</dbReference>
<dbReference type="GO" id="GO:0051539">
    <property type="term" value="F:4 iron, 4 sulfur cluster binding"/>
    <property type="evidence" value="ECO:0007669"/>
    <property type="project" value="UniProtKB-KW"/>
</dbReference>
<dbReference type="GO" id="GO:0003824">
    <property type="term" value="F:catalytic activity"/>
    <property type="evidence" value="ECO:0007669"/>
    <property type="project" value="InterPro"/>
</dbReference>
<dbReference type="GO" id="GO:0046872">
    <property type="term" value="F:metal ion binding"/>
    <property type="evidence" value="ECO:0007669"/>
    <property type="project" value="UniProtKB-KW"/>
</dbReference>
<dbReference type="CDD" id="cd01335">
    <property type="entry name" value="Radical_SAM"/>
    <property type="match status" value="1"/>
</dbReference>
<dbReference type="Gene3D" id="3.20.20.70">
    <property type="entry name" value="Aldolase class I"/>
    <property type="match status" value="1"/>
</dbReference>
<dbReference type="InterPro" id="IPR013785">
    <property type="entry name" value="Aldolase_TIM"/>
</dbReference>
<dbReference type="InterPro" id="IPR023904">
    <property type="entry name" value="Pep_rSAM_mat_YydG"/>
</dbReference>
<dbReference type="InterPro" id="IPR050377">
    <property type="entry name" value="Radical_SAM_PqqE_MftC-like"/>
</dbReference>
<dbReference type="InterPro" id="IPR007197">
    <property type="entry name" value="rSAM"/>
</dbReference>
<dbReference type="NCBIfam" id="TIGR04078">
    <property type="entry name" value="rSAM_yydG"/>
    <property type="match status" value="1"/>
</dbReference>
<dbReference type="PANTHER" id="PTHR11228:SF22">
    <property type="entry name" value="PEPTIDE BIOSYNTHESIS PROTEIN YYDG-RELATED"/>
    <property type="match status" value="1"/>
</dbReference>
<dbReference type="PANTHER" id="PTHR11228">
    <property type="entry name" value="RADICAL SAM DOMAIN PROTEIN"/>
    <property type="match status" value="1"/>
</dbReference>
<dbReference type="Pfam" id="PF13353">
    <property type="entry name" value="Fer4_12"/>
    <property type="match status" value="1"/>
</dbReference>
<dbReference type="Pfam" id="PF04055">
    <property type="entry name" value="Radical_SAM"/>
    <property type="match status" value="1"/>
</dbReference>
<dbReference type="SFLD" id="SFLDS00029">
    <property type="entry name" value="Radical_SAM"/>
    <property type="match status" value="1"/>
</dbReference>
<dbReference type="SFLD" id="SFLDG01067">
    <property type="entry name" value="SPASM/twitch_domain_containing"/>
    <property type="match status" value="1"/>
</dbReference>
<dbReference type="SUPFAM" id="SSF102114">
    <property type="entry name" value="Radical SAM enzymes"/>
    <property type="match status" value="1"/>
</dbReference>
<dbReference type="PROSITE" id="PS51918">
    <property type="entry name" value="RADICAL_SAM"/>
    <property type="match status" value="1"/>
</dbReference>
<organism>
    <name type="scientific">Bacillus subtilis (strain 168)</name>
    <dbReference type="NCBI Taxonomy" id="224308"/>
    <lineage>
        <taxon>Bacteria</taxon>
        <taxon>Bacillati</taxon>
        <taxon>Bacillota</taxon>
        <taxon>Bacilli</taxon>
        <taxon>Bacillales</taxon>
        <taxon>Bacillaceae</taxon>
        <taxon>Bacillus</taxon>
    </lineage>
</organism>
<gene>
    <name type="primary">yydG</name>
    <name type="ordered locus">BSU40170</name>
</gene>
<protein>
    <recommendedName>
        <fullName>Putative peptide biosynthesis protein YydG</fullName>
    </recommendedName>
</protein>
<reference key="1">
    <citation type="journal article" date="1997" name="DNA Res.">
        <title>Sequence analysis of the 36-kb region between gntZ and trnY genes of Bacillus subtilis genome.</title>
        <authorList>
            <person name="Kasahara Y."/>
            <person name="Nakai S."/>
            <person name="Ogasawara N."/>
        </authorList>
    </citation>
    <scope>NUCLEOTIDE SEQUENCE [GENOMIC DNA]</scope>
    <source>
        <strain>168</strain>
    </source>
</reference>
<reference key="2">
    <citation type="journal article" date="1997" name="Nature">
        <title>The complete genome sequence of the Gram-positive bacterium Bacillus subtilis.</title>
        <authorList>
            <person name="Kunst F."/>
            <person name="Ogasawara N."/>
            <person name="Moszer I."/>
            <person name="Albertini A.M."/>
            <person name="Alloni G."/>
            <person name="Azevedo V."/>
            <person name="Bertero M.G."/>
            <person name="Bessieres P."/>
            <person name="Bolotin A."/>
            <person name="Borchert S."/>
            <person name="Borriss R."/>
            <person name="Boursier L."/>
            <person name="Brans A."/>
            <person name="Braun M."/>
            <person name="Brignell S.C."/>
            <person name="Bron S."/>
            <person name="Brouillet S."/>
            <person name="Bruschi C.V."/>
            <person name="Caldwell B."/>
            <person name="Capuano V."/>
            <person name="Carter N.M."/>
            <person name="Choi S.-K."/>
            <person name="Codani J.-J."/>
            <person name="Connerton I.F."/>
            <person name="Cummings N.J."/>
            <person name="Daniel R.A."/>
            <person name="Denizot F."/>
            <person name="Devine K.M."/>
            <person name="Duesterhoeft A."/>
            <person name="Ehrlich S.D."/>
            <person name="Emmerson P.T."/>
            <person name="Entian K.-D."/>
            <person name="Errington J."/>
            <person name="Fabret C."/>
            <person name="Ferrari E."/>
            <person name="Foulger D."/>
            <person name="Fritz C."/>
            <person name="Fujita M."/>
            <person name="Fujita Y."/>
            <person name="Fuma S."/>
            <person name="Galizzi A."/>
            <person name="Galleron N."/>
            <person name="Ghim S.-Y."/>
            <person name="Glaser P."/>
            <person name="Goffeau A."/>
            <person name="Golightly E.J."/>
            <person name="Grandi G."/>
            <person name="Guiseppi G."/>
            <person name="Guy B.J."/>
            <person name="Haga K."/>
            <person name="Haiech J."/>
            <person name="Harwood C.R."/>
            <person name="Henaut A."/>
            <person name="Hilbert H."/>
            <person name="Holsappel S."/>
            <person name="Hosono S."/>
            <person name="Hullo M.-F."/>
            <person name="Itaya M."/>
            <person name="Jones L.-M."/>
            <person name="Joris B."/>
            <person name="Karamata D."/>
            <person name="Kasahara Y."/>
            <person name="Klaerr-Blanchard M."/>
            <person name="Klein C."/>
            <person name="Kobayashi Y."/>
            <person name="Koetter P."/>
            <person name="Koningstein G."/>
            <person name="Krogh S."/>
            <person name="Kumano M."/>
            <person name="Kurita K."/>
            <person name="Lapidus A."/>
            <person name="Lardinois S."/>
            <person name="Lauber J."/>
            <person name="Lazarevic V."/>
            <person name="Lee S.-M."/>
            <person name="Levine A."/>
            <person name="Liu H."/>
            <person name="Masuda S."/>
            <person name="Mauel C."/>
            <person name="Medigue C."/>
            <person name="Medina N."/>
            <person name="Mellado R.P."/>
            <person name="Mizuno M."/>
            <person name="Moestl D."/>
            <person name="Nakai S."/>
            <person name="Noback M."/>
            <person name="Noone D."/>
            <person name="O'Reilly M."/>
            <person name="Ogawa K."/>
            <person name="Ogiwara A."/>
            <person name="Oudega B."/>
            <person name="Park S.-H."/>
            <person name="Parro V."/>
            <person name="Pohl T.M."/>
            <person name="Portetelle D."/>
            <person name="Porwollik S."/>
            <person name="Prescott A.M."/>
            <person name="Presecan E."/>
            <person name="Pujic P."/>
            <person name="Purnelle B."/>
            <person name="Rapoport G."/>
            <person name="Rey M."/>
            <person name="Reynolds S."/>
            <person name="Rieger M."/>
            <person name="Rivolta C."/>
            <person name="Rocha E."/>
            <person name="Roche B."/>
            <person name="Rose M."/>
            <person name="Sadaie Y."/>
            <person name="Sato T."/>
            <person name="Scanlan E."/>
            <person name="Schleich S."/>
            <person name="Schroeter R."/>
            <person name="Scoffone F."/>
            <person name="Sekiguchi J."/>
            <person name="Sekowska A."/>
            <person name="Seror S.J."/>
            <person name="Serror P."/>
            <person name="Shin B.-S."/>
            <person name="Soldo B."/>
            <person name="Sorokin A."/>
            <person name="Tacconi E."/>
            <person name="Takagi T."/>
            <person name="Takahashi H."/>
            <person name="Takemaru K."/>
            <person name="Takeuchi M."/>
            <person name="Tamakoshi A."/>
            <person name="Tanaka T."/>
            <person name="Terpstra P."/>
            <person name="Tognoni A."/>
            <person name="Tosato V."/>
            <person name="Uchiyama S."/>
            <person name="Vandenbol M."/>
            <person name="Vannier F."/>
            <person name="Vassarotti A."/>
            <person name="Viari A."/>
            <person name="Wambutt R."/>
            <person name="Wedler E."/>
            <person name="Wedler H."/>
            <person name="Weitzenegger T."/>
            <person name="Winters P."/>
            <person name="Wipat A."/>
            <person name="Yamamoto H."/>
            <person name="Yamane K."/>
            <person name="Yasumoto K."/>
            <person name="Yata K."/>
            <person name="Yoshida K."/>
            <person name="Yoshikawa H.-F."/>
            <person name="Zumstein E."/>
            <person name="Yoshikawa H."/>
            <person name="Danchin A."/>
        </authorList>
    </citation>
    <scope>NUCLEOTIDE SEQUENCE [LARGE SCALE GENOMIC DNA]</scope>
    <source>
        <strain>168</strain>
    </source>
</reference>
<reference key="3">
    <citation type="journal article" date="2007" name="J. Bacteriol.">
        <title>The yydFGHIJ operon of Bacillus subtilis encodes a peptide that induces the LiaRS two-component system.</title>
        <authorList>
            <person name="Butcher B.G."/>
            <person name="Lin Y.-P."/>
            <person name="Helmann J.D."/>
        </authorList>
    </citation>
    <scope>SUGGESTION OF FUNCTION</scope>
    <scope>OPERON STRUCTURE</scope>
    <source>
        <strain>168</strain>
    </source>
</reference>
<feature type="chain" id="PRO_0000370198" description="Putative peptide biosynthesis protein YydG">
    <location>
        <begin position="1"/>
        <end position="319"/>
    </location>
</feature>
<feature type="domain" description="Radical SAM core" evidence="2">
    <location>
        <begin position="1"/>
        <end position="214"/>
    </location>
</feature>
<feature type="binding site" evidence="1">
    <location>
        <position position="14"/>
    </location>
    <ligand>
        <name>[4Fe-4S] cluster</name>
        <dbReference type="ChEBI" id="CHEBI:49883"/>
        <note>4Fe-4S-S-AdoMet</note>
    </ligand>
</feature>
<feature type="binding site" evidence="1">
    <location>
        <position position="18"/>
    </location>
    <ligand>
        <name>[4Fe-4S] cluster</name>
        <dbReference type="ChEBI" id="CHEBI:49883"/>
        <note>4Fe-4S-S-AdoMet</note>
    </ligand>
</feature>
<feature type="binding site" evidence="1">
    <location>
        <position position="21"/>
    </location>
    <ligand>
        <name>[4Fe-4S] cluster</name>
        <dbReference type="ChEBI" id="CHEBI:49883"/>
        <note>4Fe-4S-S-AdoMet</note>
    </ligand>
</feature>
<feature type="strand" evidence="5">
    <location>
        <begin position="4"/>
        <end position="9"/>
    </location>
</feature>
<feature type="helix" evidence="5">
    <location>
        <begin position="35"/>
        <end position="47"/>
    </location>
</feature>
<feature type="strand" evidence="5">
    <location>
        <begin position="53"/>
        <end position="59"/>
    </location>
</feature>
<feature type="turn" evidence="5">
    <location>
        <begin position="61"/>
        <end position="64"/>
    </location>
</feature>
<feature type="helix" evidence="5">
    <location>
        <begin position="65"/>
        <end position="75"/>
    </location>
</feature>
<feature type="helix" evidence="5">
    <location>
        <begin position="76"/>
        <end position="78"/>
    </location>
</feature>
<feature type="strand" evidence="5">
    <location>
        <begin position="81"/>
        <end position="86"/>
    </location>
</feature>
<feature type="helix" evidence="5">
    <location>
        <begin position="89"/>
        <end position="92"/>
    </location>
</feature>
<feature type="helix" evidence="5">
    <location>
        <begin position="94"/>
        <end position="106"/>
    </location>
</feature>
<feature type="strand" evidence="5">
    <location>
        <begin position="109"/>
        <end position="115"/>
    </location>
</feature>
<feature type="turn" evidence="5">
    <location>
        <begin position="118"/>
        <end position="123"/>
    </location>
</feature>
<feature type="helix" evidence="5">
    <location>
        <begin position="126"/>
        <end position="136"/>
    </location>
</feature>
<feature type="strand" evidence="5">
    <location>
        <begin position="142"/>
        <end position="149"/>
    </location>
</feature>
<feature type="helix" evidence="5">
    <location>
        <begin position="157"/>
        <end position="163"/>
    </location>
</feature>
<feature type="helix" evidence="5">
    <location>
        <begin position="164"/>
        <end position="167"/>
    </location>
</feature>
<feature type="strand" evidence="5">
    <location>
        <begin position="171"/>
        <end position="175"/>
    </location>
</feature>
<feature type="helix" evidence="5">
    <location>
        <begin position="182"/>
        <end position="186"/>
    </location>
</feature>
<feature type="helix" evidence="5">
    <location>
        <begin position="189"/>
        <end position="191"/>
    </location>
</feature>
<feature type="strand" evidence="4">
    <location>
        <begin position="196"/>
        <end position="199"/>
    </location>
</feature>
<feature type="helix" evidence="5">
    <location>
        <begin position="201"/>
        <end position="203"/>
    </location>
</feature>
<feature type="strand" evidence="5">
    <location>
        <begin position="219"/>
        <end position="221"/>
    </location>
</feature>
<feature type="helix" evidence="5">
    <location>
        <begin position="225"/>
        <end position="229"/>
    </location>
</feature>
<feature type="strand" evidence="5">
    <location>
        <begin position="237"/>
        <end position="239"/>
    </location>
</feature>
<feature type="helix" evidence="5">
    <location>
        <begin position="242"/>
        <end position="251"/>
    </location>
</feature>
<feature type="helix" evidence="5">
    <location>
        <begin position="253"/>
        <end position="261"/>
    </location>
</feature>
<feature type="helix" evidence="5">
    <location>
        <begin position="263"/>
        <end position="272"/>
    </location>
</feature>
<feature type="turn" evidence="5">
    <location>
        <begin position="276"/>
        <end position="280"/>
    </location>
</feature>
<feature type="strand" evidence="5">
    <location>
        <begin position="283"/>
        <end position="287"/>
    </location>
</feature>
<feature type="helix" evidence="5">
    <location>
        <begin position="288"/>
        <end position="296"/>
    </location>
</feature>
<feature type="helix" evidence="5">
    <location>
        <begin position="299"/>
        <end position="304"/>
    </location>
</feature>
<feature type="helix" evidence="5">
    <location>
        <begin position="306"/>
        <end position="311"/>
    </location>
</feature>
<sequence length="319" mass="37212">MYNKTVSINLDSRCNASCDHCCFSSSPTSTTRMEKEYIRELVTEFAKNKTIQVISFTGGEVFLDYKFLKELMEIIKPYEKQITLISNGFWGLSKKKVQEYFHDMNSLNVIALTISYDEYHAPFVKSSSIKNILEHSRKYPDIDISLNMAVTKDKMSNHILEELGDSILGVKITKFPMISVGAAKTRIKQENIHKFYSLEDEDSLHCPGYDIVYHHDGEIYPCCSPAIFETKITLREEYNQSFERTVEKLNSNLLLFILRKEGFKWFLNILKENNKIEEFDIPYEFSSICGVCGSLFNSAEKINYFYPYMEKYYNENFKV</sequence>
<evidence type="ECO:0000255" key="1"/>
<evidence type="ECO:0000255" key="2">
    <source>
        <dbReference type="PROSITE-ProRule" id="PRU01266"/>
    </source>
</evidence>
<evidence type="ECO:0000305" key="3"/>
<evidence type="ECO:0007829" key="4">
    <source>
        <dbReference type="PDB" id="8AI2"/>
    </source>
</evidence>
<evidence type="ECO:0007829" key="5">
    <source>
        <dbReference type="PDB" id="8AI4"/>
    </source>
</evidence>
<keyword id="KW-0002">3D-structure</keyword>
<keyword id="KW-0004">4Fe-4S</keyword>
<keyword id="KW-0408">Iron</keyword>
<keyword id="KW-0411">Iron-sulfur</keyword>
<keyword id="KW-0479">Metal-binding</keyword>
<keyword id="KW-1185">Reference proteome</keyword>
<keyword id="KW-0949">S-adenosyl-L-methionine</keyword>
<accession>Q45595</accession>
<accession>Q794X0</accession>
<proteinExistence type="evidence at protein level"/>